<protein>
    <recommendedName>
        <fullName evidence="1">Ribosome-binding factor A</fullName>
    </recommendedName>
</protein>
<comment type="function">
    <text evidence="1">One of several proteins that assist in the late maturation steps of the functional core of the 30S ribosomal subunit. Associates with free 30S ribosomal subunits (but not with 30S subunits that are part of 70S ribosomes or polysomes). Required for efficient processing of 16S rRNA. May interact with the 5'-terminal helix region of 16S rRNA.</text>
</comment>
<comment type="subunit">
    <text evidence="1">Monomer. Binds 30S ribosomal subunits, but not 50S ribosomal subunits or 70S ribosomes.</text>
</comment>
<comment type="subcellular location">
    <subcellularLocation>
        <location evidence="1">Cytoplasm</location>
    </subcellularLocation>
</comment>
<comment type="similarity">
    <text evidence="1">Belongs to the RbfA family.</text>
</comment>
<accession>A7IC07</accession>
<feature type="chain" id="PRO_1000088944" description="Ribosome-binding factor A">
    <location>
        <begin position="1"/>
        <end position="151"/>
    </location>
</feature>
<feature type="region of interest" description="Disordered" evidence="2">
    <location>
        <begin position="120"/>
        <end position="151"/>
    </location>
</feature>
<dbReference type="EMBL" id="CP000781">
    <property type="protein sequence ID" value="ABS65550.1"/>
    <property type="molecule type" value="Genomic_DNA"/>
</dbReference>
<dbReference type="SMR" id="A7IC07"/>
<dbReference type="STRING" id="78245.Xaut_0292"/>
<dbReference type="KEGG" id="xau:Xaut_0292"/>
<dbReference type="eggNOG" id="COG0858">
    <property type="taxonomic scope" value="Bacteria"/>
</dbReference>
<dbReference type="HOGENOM" id="CLU_089475_1_0_5"/>
<dbReference type="OrthoDB" id="9805051at2"/>
<dbReference type="PhylomeDB" id="A7IC07"/>
<dbReference type="Proteomes" id="UP000002417">
    <property type="component" value="Chromosome"/>
</dbReference>
<dbReference type="GO" id="GO:0005829">
    <property type="term" value="C:cytosol"/>
    <property type="evidence" value="ECO:0007669"/>
    <property type="project" value="TreeGrafter"/>
</dbReference>
<dbReference type="GO" id="GO:0043024">
    <property type="term" value="F:ribosomal small subunit binding"/>
    <property type="evidence" value="ECO:0007669"/>
    <property type="project" value="TreeGrafter"/>
</dbReference>
<dbReference type="GO" id="GO:0030490">
    <property type="term" value="P:maturation of SSU-rRNA"/>
    <property type="evidence" value="ECO:0007669"/>
    <property type="project" value="UniProtKB-UniRule"/>
</dbReference>
<dbReference type="Gene3D" id="3.30.300.20">
    <property type="match status" value="1"/>
</dbReference>
<dbReference type="HAMAP" id="MF_00003">
    <property type="entry name" value="RbfA"/>
    <property type="match status" value="1"/>
</dbReference>
<dbReference type="InterPro" id="IPR015946">
    <property type="entry name" value="KH_dom-like_a/b"/>
</dbReference>
<dbReference type="InterPro" id="IPR000238">
    <property type="entry name" value="RbfA"/>
</dbReference>
<dbReference type="InterPro" id="IPR023799">
    <property type="entry name" value="RbfA_dom_sf"/>
</dbReference>
<dbReference type="InterPro" id="IPR020053">
    <property type="entry name" value="Ribosome-bd_factorA_CS"/>
</dbReference>
<dbReference type="NCBIfam" id="NF001802">
    <property type="entry name" value="PRK00521.2-5"/>
    <property type="match status" value="1"/>
</dbReference>
<dbReference type="NCBIfam" id="TIGR00082">
    <property type="entry name" value="rbfA"/>
    <property type="match status" value="1"/>
</dbReference>
<dbReference type="PANTHER" id="PTHR33515">
    <property type="entry name" value="RIBOSOME-BINDING FACTOR A, CHLOROPLASTIC-RELATED"/>
    <property type="match status" value="1"/>
</dbReference>
<dbReference type="PANTHER" id="PTHR33515:SF1">
    <property type="entry name" value="RIBOSOME-BINDING FACTOR A, CHLOROPLASTIC-RELATED"/>
    <property type="match status" value="1"/>
</dbReference>
<dbReference type="Pfam" id="PF02033">
    <property type="entry name" value="RBFA"/>
    <property type="match status" value="1"/>
</dbReference>
<dbReference type="SUPFAM" id="SSF89919">
    <property type="entry name" value="Ribosome-binding factor A, RbfA"/>
    <property type="match status" value="1"/>
</dbReference>
<dbReference type="PROSITE" id="PS01319">
    <property type="entry name" value="RBFA"/>
    <property type="match status" value="1"/>
</dbReference>
<sequence length="151" mass="16604">MKPDTRTGGGPSQRMLRVGELVRHALADVLQRGSVTDPVLAAHIITVPEVRMSPDLKIATCYVMPLGGKDITPVIKALAANARYLRLEVGRRMELKSVPELRFREDTSFDEGARMDALLRSPKVVRDLDDTSSDDTSPDANTDTDKETDAE</sequence>
<reference key="1">
    <citation type="submission" date="2007-07" db="EMBL/GenBank/DDBJ databases">
        <title>Complete sequence of chromosome of Xanthobacter autotrophicus Py2.</title>
        <authorList>
            <consortium name="US DOE Joint Genome Institute"/>
            <person name="Copeland A."/>
            <person name="Lucas S."/>
            <person name="Lapidus A."/>
            <person name="Barry K."/>
            <person name="Glavina del Rio T."/>
            <person name="Hammon N."/>
            <person name="Israni S."/>
            <person name="Dalin E."/>
            <person name="Tice H."/>
            <person name="Pitluck S."/>
            <person name="Sims D."/>
            <person name="Brettin T."/>
            <person name="Bruce D."/>
            <person name="Detter J.C."/>
            <person name="Han C."/>
            <person name="Tapia R."/>
            <person name="Brainard J."/>
            <person name="Schmutz J."/>
            <person name="Larimer F."/>
            <person name="Land M."/>
            <person name="Hauser L."/>
            <person name="Kyrpides N."/>
            <person name="Kim E."/>
            <person name="Ensigns S.A."/>
            <person name="Richardson P."/>
        </authorList>
    </citation>
    <scope>NUCLEOTIDE SEQUENCE [LARGE SCALE GENOMIC DNA]</scope>
    <source>
        <strain>ATCC BAA-1158 / Py2</strain>
    </source>
</reference>
<gene>
    <name evidence="1" type="primary">rbfA</name>
    <name type="ordered locus">Xaut_0292</name>
</gene>
<keyword id="KW-0963">Cytoplasm</keyword>
<keyword id="KW-1185">Reference proteome</keyword>
<keyword id="KW-0690">Ribosome biogenesis</keyword>
<organism>
    <name type="scientific">Xanthobacter autotrophicus (strain ATCC BAA-1158 / Py2)</name>
    <dbReference type="NCBI Taxonomy" id="78245"/>
    <lineage>
        <taxon>Bacteria</taxon>
        <taxon>Pseudomonadati</taxon>
        <taxon>Pseudomonadota</taxon>
        <taxon>Alphaproteobacteria</taxon>
        <taxon>Hyphomicrobiales</taxon>
        <taxon>Xanthobacteraceae</taxon>
        <taxon>Xanthobacter</taxon>
    </lineage>
</organism>
<name>RBFA_XANP2</name>
<evidence type="ECO:0000255" key="1">
    <source>
        <dbReference type="HAMAP-Rule" id="MF_00003"/>
    </source>
</evidence>
<evidence type="ECO:0000256" key="2">
    <source>
        <dbReference type="SAM" id="MobiDB-lite"/>
    </source>
</evidence>
<proteinExistence type="inferred from homology"/>